<reference key="1">
    <citation type="journal article" date="2008" name="BMC Microbiol.">
        <title>Complete genome sequence of Treponema pallidum ssp. pallidum strain SS14 determined with oligonucleotide arrays.</title>
        <authorList>
            <person name="Matejkova P."/>
            <person name="Strouhal M."/>
            <person name="Smajs D."/>
            <person name="Norris S.J."/>
            <person name="Palzkill T."/>
            <person name="Petrosino J.F."/>
            <person name="Sodergren E."/>
            <person name="Norton J.E."/>
            <person name="Singh J."/>
            <person name="Richmond T.A."/>
            <person name="Molla M.N."/>
            <person name="Albert T.J."/>
            <person name="Weinstock G.M."/>
        </authorList>
    </citation>
    <scope>NUCLEOTIDE SEQUENCE [LARGE SCALE GENOMIC DNA]</scope>
    <source>
        <strain>SS14</strain>
    </source>
</reference>
<sequence length="122" mass="13359">MIQVQSRLNVADNSGARLVQCIKVVGGSRRRYASVGDIIVVAVKDALPTSVIKKGSVEKAVIVRVSKEYRRVDGTYIRFDDNACVVIDANGNPKGKRIFGPVARELRDMDFTKIVSLAPEVL</sequence>
<feature type="chain" id="PRO_1000144346" description="Large ribosomal subunit protein uL14">
    <location>
        <begin position="1"/>
        <end position="122"/>
    </location>
</feature>
<proteinExistence type="inferred from homology"/>
<protein>
    <recommendedName>
        <fullName evidence="1">Large ribosomal subunit protein uL14</fullName>
    </recommendedName>
    <alternativeName>
        <fullName evidence="2">50S ribosomal protein L14</fullName>
    </alternativeName>
</protein>
<comment type="function">
    <text evidence="1">Binds to 23S rRNA. Forms part of two intersubunit bridges in the 70S ribosome.</text>
</comment>
<comment type="subunit">
    <text evidence="1">Part of the 50S ribosomal subunit. Forms a cluster with proteins L3 and L19. In the 70S ribosome, L14 and L19 interact and together make contacts with the 16S rRNA in bridges B5 and B8.</text>
</comment>
<comment type="similarity">
    <text evidence="1">Belongs to the universal ribosomal protein uL14 family.</text>
</comment>
<evidence type="ECO:0000255" key="1">
    <source>
        <dbReference type="HAMAP-Rule" id="MF_01367"/>
    </source>
</evidence>
<evidence type="ECO:0000305" key="2"/>
<accession>B2S2E6</accession>
<name>RL14_TREPS</name>
<gene>
    <name evidence="1" type="primary">rplN</name>
    <name type="ordered locus">TPASS_0199</name>
</gene>
<dbReference type="EMBL" id="CP000805">
    <property type="protein sequence ID" value="ACD70625.1"/>
    <property type="molecule type" value="Genomic_DNA"/>
</dbReference>
<dbReference type="RefSeq" id="WP_010881646.1">
    <property type="nucleotide sequence ID" value="NC_021508.1"/>
</dbReference>
<dbReference type="SMR" id="B2S2E6"/>
<dbReference type="GeneID" id="93875987"/>
<dbReference type="KEGG" id="tpp:TPASS_0199"/>
<dbReference type="PATRIC" id="fig|455434.6.peg.202"/>
<dbReference type="Proteomes" id="UP000001202">
    <property type="component" value="Chromosome"/>
</dbReference>
<dbReference type="GO" id="GO:0022625">
    <property type="term" value="C:cytosolic large ribosomal subunit"/>
    <property type="evidence" value="ECO:0007669"/>
    <property type="project" value="TreeGrafter"/>
</dbReference>
<dbReference type="GO" id="GO:0070180">
    <property type="term" value="F:large ribosomal subunit rRNA binding"/>
    <property type="evidence" value="ECO:0007669"/>
    <property type="project" value="TreeGrafter"/>
</dbReference>
<dbReference type="GO" id="GO:0003735">
    <property type="term" value="F:structural constituent of ribosome"/>
    <property type="evidence" value="ECO:0007669"/>
    <property type="project" value="InterPro"/>
</dbReference>
<dbReference type="GO" id="GO:0006412">
    <property type="term" value="P:translation"/>
    <property type="evidence" value="ECO:0007669"/>
    <property type="project" value="UniProtKB-UniRule"/>
</dbReference>
<dbReference type="CDD" id="cd00337">
    <property type="entry name" value="Ribosomal_uL14"/>
    <property type="match status" value="1"/>
</dbReference>
<dbReference type="FunFam" id="2.40.150.20:FF:000001">
    <property type="entry name" value="50S ribosomal protein L14"/>
    <property type="match status" value="1"/>
</dbReference>
<dbReference type="Gene3D" id="2.40.150.20">
    <property type="entry name" value="Ribosomal protein L14"/>
    <property type="match status" value="1"/>
</dbReference>
<dbReference type="HAMAP" id="MF_01367">
    <property type="entry name" value="Ribosomal_uL14"/>
    <property type="match status" value="1"/>
</dbReference>
<dbReference type="InterPro" id="IPR000218">
    <property type="entry name" value="Ribosomal_uL14"/>
</dbReference>
<dbReference type="InterPro" id="IPR005745">
    <property type="entry name" value="Ribosomal_uL14_bac-type"/>
</dbReference>
<dbReference type="InterPro" id="IPR019972">
    <property type="entry name" value="Ribosomal_uL14_CS"/>
</dbReference>
<dbReference type="InterPro" id="IPR036853">
    <property type="entry name" value="Ribosomal_uL14_sf"/>
</dbReference>
<dbReference type="NCBIfam" id="TIGR01067">
    <property type="entry name" value="rplN_bact"/>
    <property type="match status" value="1"/>
</dbReference>
<dbReference type="PANTHER" id="PTHR11761">
    <property type="entry name" value="50S/60S RIBOSOMAL PROTEIN L14/L23"/>
    <property type="match status" value="1"/>
</dbReference>
<dbReference type="PANTHER" id="PTHR11761:SF3">
    <property type="entry name" value="LARGE RIBOSOMAL SUBUNIT PROTEIN UL14M"/>
    <property type="match status" value="1"/>
</dbReference>
<dbReference type="Pfam" id="PF00238">
    <property type="entry name" value="Ribosomal_L14"/>
    <property type="match status" value="1"/>
</dbReference>
<dbReference type="SMART" id="SM01374">
    <property type="entry name" value="Ribosomal_L14"/>
    <property type="match status" value="1"/>
</dbReference>
<dbReference type="SUPFAM" id="SSF50193">
    <property type="entry name" value="Ribosomal protein L14"/>
    <property type="match status" value="1"/>
</dbReference>
<dbReference type="PROSITE" id="PS00049">
    <property type="entry name" value="RIBOSOMAL_L14"/>
    <property type="match status" value="1"/>
</dbReference>
<organism>
    <name type="scientific">Treponema pallidum subsp. pallidum (strain SS14)</name>
    <dbReference type="NCBI Taxonomy" id="455434"/>
    <lineage>
        <taxon>Bacteria</taxon>
        <taxon>Pseudomonadati</taxon>
        <taxon>Spirochaetota</taxon>
        <taxon>Spirochaetia</taxon>
        <taxon>Spirochaetales</taxon>
        <taxon>Treponemataceae</taxon>
        <taxon>Treponema</taxon>
    </lineage>
</organism>
<keyword id="KW-0687">Ribonucleoprotein</keyword>
<keyword id="KW-0689">Ribosomal protein</keyword>
<keyword id="KW-0694">RNA-binding</keyword>
<keyword id="KW-0699">rRNA-binding</keyword>